<accession>B3QLW6</accession>
<name>MURD_CHLP8</name>
<reference key="1">
    <citation type="submission" date="2008-06" db="EMBL/GenBank/DDBJ databases">
        <title>Complete sequence of Chlorobaculum parvum NCIB 8327.</title>
        <authorList>
            <consortium name="US DOE Joint Genome Institute"/>
            <person name="Lucas S."/>
            <person name="Copeland A."/>
            <person name="Lapidus A."/>
            <person name="Glavina del Rio T."/>
            <person name="Dalin E."/>
            <person name="Tice H."/>
            <person name="Bruce D."/>
            <person name="Goodwin L."/>
            <person name="Pitluck S."/>
            <person name="Schmutz J."/>
            <person name="Larimer F."/>
            <person name="Land M."/>
            <person name="Hauser L."/>
            <person name="Kyrpides N."/>
            <person name="Mikhailova N."/>
            <person name="Zhao F."/>
            <person name="Li T."/>
            <person name="Liu Z."/>
            <person name="Overmann J."/>
            <person name="Bryant D.A."/>
            <person name="Richardson P."/>
        </authorList>
    </citation>
    <scope>NUCLEOTIDE SEQUENCE [LARGE SCALE GENOMIC DNA]</scope>
    <source>
        <strain>DSM 263 / NCIMB 8327</strain>
    </source>
</reference>
<dbReference type="EC" id="6.3.2.9" evidence="1"/>
<dbReference type="EMBL" id="CP001099">
    <property type="protein sequence ID" value="ACF12452.1"/>
    <property type="molecule type" value="Genomic_DNA"/>
</dbReference>
<dbReference type="RefSeq" id="WP_012503285.1">
    <property type="nucleotide sequence ID" value="NC_011027.1"/>
</dbReference>
<dbReference type="SMR" id="B3QLW6"/>
<dbReference type="STRING" id="517417.Cpar_2066"/>
<dbReference type="KEGG" id="cpc:Cpar_2066"/>
<dbReference type="eggNOG" id="COG0771">
    <property type="taxonomic scope" value="Bacteria"/>
</dbReference>
<dbReference type="HOGENOM" id="CLU_032540_0_0_10"/>
<dbReference type="OrthoDB" id="9809796at2"/>
<dbReference type="UniPathway" id="UPA00219"/>
<dbReference type="Proteomes" id="UP000008811">
    <property type="component" value="Chromosome"/>
</dbReference>
<dbReference type="GO" id="GO:0005737">
    <property type="term" value="C:cytoplasm"/>
    <property type="evidence" value="ECO:0007669"/>
    <property type="project" value="UniProtKB-SubCell"/>
</dbReference>
<dbReference type="GO" id="GO:0005524">
    <property type="term" value="F:ATP binding"/>
    <property type="evidence" value="ECO:0007669"/>
    <property type="project" value="UniProtKB-UniRule"/>
</dbReference>
<dbReference type="GO" id="GO:0008764">
    <property type="term" value="F:UDP-N-acetylmuramoylalanine-D-glutamate ligase activity"/>
    <property type="evidence" value="ECO:0007669"/>
    <property type="project" value="UniProtKB-UniRule"/>
</dbReference>
<dbReference type="GO" id="GO:0051301">
    <property type="term" value="P:cell division"/>
    <property type="evidence" value="ECO:0007669"/>
    <property type="project" value="UniProtKB-KW"/>
</dbReference>
<dbReference type="GO" id="GO:0071555">
    <property type="term" value="P:cell wall organization"/>
    <property type="evidence" value="ECO:0007669"/>
    <property type="project" value="UniProtKB-KW"/>
</dbReference>
<dbReference type="GO" id="GO:0009252">
    <property type="term" value="P:peptidoglycan biosynthetic process"/>
    <property type="evidence" value="ECO:0007669"/>
    <property type="project" value="UniProtKB-UniRule"/>
</dbReference>
<dbReference type="GO" id="GO:0008360">
    <property type="term" value="P:regulation of cell shape"/>
    <property type="evidence" value="ECO:0007669"/>
    <property type="project" value="UniProtKB-KW"/>
</dbReference>
<dbReference type="Gene3D" id="3.90.190.20">
    <property type="entry name" value="Mur ligase, C-terminal domain"/>
    <property type="match status" value="1"/>
</dbReference>
<dbReference type="Gene3D" id="3.40.1190.10">
    <property type="entry name" value="Mur-like, catalytic domain"/>
    <property type="match status" value="1"/>
</dbReference>
<dbReference type="Gene3D" id="3.40.50.720">
    <property type="entry name" value="NAD(P)-binding Rossmann-like Domain"/>
    <property type="match status" value="1"/>
</dbReference>
<dbReference type="HAMAP" id="MF_00639">
    <property type="entry name" value="MurD"/>
    <property type="match status" value="1"/>
</dbReference>
<dbReference type="InterPro" id="IPR036565">
    <property type="entry name" value="Mur-like_cat_sf"/>
</dbReference>
<dbReference type="InterPro" id="IPR004101">
    <property type="entry name" value="Mur_ligase_C"/>
</dbReference>
<dbReference type="InterPro" id="IPR036615">
    <property type="entry name" value="Mur_ligase_C_dom_sf"/>
</dbReference>
<dbReference type="InterPro" id="IPR013221">
    <property type="entry name" value="Mur_ligase_cen"/>
</dbReference>
<dbReference type="InterPro" id="IPR005762">
    <property type="entry name" value="MurD"/>
</dbReference>
<dbReference type="NCBIfam" id="TIGR01087">
    <property type="entry name" value="murD"/>
    <property type="match status" value="1"/>
</dbReference>
<dbReference type="PANTHER" id="PTHR43692">
    <property type="entry name" value="UDP-N-ACETYLMURAMOYLALANINE--D-GLUTAMATE LIGASE"/>
    <property type="match status" value="1"/>
</dbReference>
<dbReference type="PANTHER" id="PTHR43692:SF1">
    <property type="entry name" value="UDP-N-ACETYLMURAMOYLALANINE--D-GLUTAMATE LIGASE"/>
    <property type="match status" value="1"/>
</dbReference>
<dbReference type="Pfam" id="PF02875">
    <property type="entry name" value="Mur_ligase_C"/>
    <property type="match status" value="1"/>
</dbReference>
<dbReference type="Pfam" id="PF08245">
    <property type="entry name" value="Mur_ligase_M"/>
    <property type="match status" value="1"/>
</dbReference>
<dbReference type="Pfam" id="PF21799">
    <property type="entry name" value="MurD-like_N"/>
    <property type="match status" value="1"/>
</dbReference>
<dbReference type="Pfam" id="PF21377">
    <property type="entry name" value="MurD_N"/>
    <property type="match status" value="1"/>
</dbReference>
<dbReference type="SUPFAM" id="SSF51984">
    <property type="entry name" value="MurCD N-terminal domain"/>
    <property type="match status" value="1"/>
</dbReference>
<dbReference type="SUPFAM" id="SSF53623">
    <property type="entry name" value="MurD-like peptide ligases, catalytic domain"/>
    <property type="match status" value="1"/>
</dbReference>
<dbReference type="SUPFAM" id="SSF53244">
    <property type="entry name" value="MurD-like peptide ligases, peptide-binding domain"/>
    <property type="match status" value="1"/>
</dbReference>
<comment type="function">
    <text evidence="1">Cell wall formation. Catalyzes the addition of glutamate to the nucleotide precursor UDP-N-acetylmuramoyl-L-alanine (UMA).</text>
</comment>
<comment type="catalytic activity">
    <reaction evidence="1">
        <text>UDP-N-acetyl-alpha-D-muramoyl-L-alanine + D-glutamate + ATP = UDP-N-acetyl-alpha-D-muramoyl-L-alanyl-D-glutamate + ADP + phosphate + H(+)</text>
        <dbReference type="Rhea" id="RHEA:16429"/>
        <dbReference type="ChEBI" id="CHEBI:15378"/>
        <dbReference type="ChEBI" id="CHEBI:29986"/>
        <dbReference type="ChEBI" id="CHEBI:30616"/>
        <dbReference type="ChEBI" id="CHEBI:43474"/>
        <dbReference type="ChEBI" id="CHEBI:83898"/>
        <dbReference type="ChEBI" id="CHEBI:83900"/>
        <dbReference type="ChEBI" id="CHEBI:456216"/>
        <dbReference type="EC" id="6.3.2.9"/>
    </reaction>
</comment>
<comment type="pathway">
    <text evidence="1">Cell wall biogenesis; peptidoglycan biosynthesis.</text>
</comment>
<comment type="subcellular location">
    <subcellularLocation>
        <location evidence="1">Cytoplasm</location>
    </subcellularLocation>
</comment>
<comment type="similarity">
    <text evidence="1">Belongs to the MurCDEF family.</text>
</comment>
<keyword id="KW-0067">ATP-binding</keyword>
<keyword id="KW-0131">Cell cycle</keyword>
<keyword id="KW-0132">Cell division</keyword>
<keyword id="KW-0133">Cell shape</keyword>
<keyword id="KW-0961">Cell wall biogenesis/degradation</keyword>
<keyword id="KW-0963">Cytoplasm</keyword>
<keyword id="KW-0436">Ligase</keyword>
<keyword id="KW-0547">Nucleotide-binding</keyword>
<keyword id="KW-0573">Peptidoglycan synthesis</keyword>
<gene>
    <name evidence="1" type="primary">murD</name>
    <name type="ordered locus">Cpar_2066</name>
</gene>
<proteinExistence type="inferred from homology"/>
<evidence type="ECO:0000255" key="1">
    <source>
        <dbReference type="HAMAP-Rule" id="MF_00639"/>
    </source>
</evidence>
<organism>
    <name type="scientific">Chlorobaculum parvum (strain DSM 263 / NCIMB 8327)</name>
    <name type="common">Chlorobium vibrioforme subsp. thiosulfatophilum</name>
    <dbReference type="NCBI Taxonomy" id="517417"/>
    <lineage>
        <taxon>Bacteria</taxon>
        <taxon>Pseudomonadati</taxon>
        <taxon>Chlorobiota</taxon>
        <taxon>Chlorobiia</taxon>
        <taxon>Chlorobiales</taxon>
        <taxon>Chlorobiaceae</taxon>
        <taxon>Chlorobaculum</taxon>
    </lineage>
</organism>
<sequence length="467" mass="50027">MNPEALKGVAVSVIGAGKSGVAAAGLLASAGARPLVSEFGTVKAEAAEQMRALGVPFEEGGHSERVFEAELCVVSPGIPRTAPVIREMEARGISVVSEIELASWFCRARIIGITGTDGKTTTATLIHRICEADGEQQGYRAFSVGNIGTPFSSEVSGMEPDDIAVLELSSYQLEGCSSFRPNIAVLTNITPDHMDRYGGDIHAYARAKFRIHASQQAGDTLIYNHDDPLLRAHFEGDGPWPFKVVRTGLKAESFEGVSEDFVSVADGWIVIRTAGLTEQFMPVDEVMKPGFRGEHNLYNVLSSVAAARAAGVRDDAVRRSLSEFGGVEHRQEFVGSFCGVDWINDSKATNVNAMRQALQTVPAGMVLIAGGRDKGNDYASIAELVKEKVSCIVAIGESRGKIAEAFRGVVPVFEAASLHEAVELARQSARPGGSVLFSPACSSFDMFSDFEDRGRQFKQSVREMASC</sequence>
<protein>
    <recommendedName>
        <fullName evidence="1">UDP-N-acetylmuramoylalanine--D-glutamate ligase</fullName>
        <ecNumber evidence="1">6.3.2.9</ecNumber>
    </recommendedName>
    <alternativeName>
        <fullName evidence="1">D-glutamic acid-adding enzyme</fullName>
    </alternativeName>
    <alternativeName>
        <fullName evidence="1">UDP-N-acetylmuramoyl-L-alanyl-D-glutamate synthetase</fullName>
    </alternativeName>
</protein>
<feature type="chain" id="PRO_1000130838" description="UDP-N-acetylmuramoylalanine--D-glutamate ligase">
    <location>
        <begin position="1"/>
        <end position="467"/>
    </location>
</feature>
<feature type="binding site" evidence="1">
    <location>
        <begin position="115"/>
        <end position="121"/>
    </location>
    <ligand>
        <name>ATP</name>
        <dbReference type="ChEBI" id="CHEBI:30616"/>
    </ligand>
</feature>